<sequence>MMKSKMKLMPLLVSVTLISGCTVLPGSNMSTMGKDVIKQQDADFDLDKMVNVYPLTPRLIDQLRPRPNVARPNMTLESEIANYQYRVGPGDVLNVTVWDHPELTTPAGQYRSSSDTGNWVQPDGTMFYPYIGKVHVVGKTLAEIRSDITGRLATYIADPQVDVNIAAFRSQKAYISGQVNKSGQQAITNVPLTILDAINAAGGLTDTADWRNVVLTHNGREERISLQALMQNGDLNQNRLLYPGDILYVPRNDDLKVFVMGEVKKQSTLKMDFSGMTLTEALGNAEGIDMTTSNASGIFVIRPLKGEGGRNGKIANIYQLDMSDATSLVMATEFRLQPYDVVYVTTAPVSRWNRLINQLLPTISGVRYMTDTASDIHNW</sequence>
<organism>
    <name type="scientific">Escherichia coli (strain K12)</name>
    <dbReference type="NCBI Taxonomy" id="83333"/>
    <lineage>
        <taxon>Bacteria</taxon>
        <taxon>Pseudomonadati</taxon>
        <taxon>Pseudomonadota</taxon>
        <taxon>Gammaproteobacteria</taxon>
        <taxon>Enterobacterales</taxon>
        <taxon>Enterobacteriaceae</taxon>
        <taxon>Escherichia</taxon>
    </lineage>
</organism>
<evidence type="ECO:0000250" key="1"/>
<evidence type="ECO:0000255" key="2">
    <source>
        <dbReference type="PROSITE-ProRule" id="PRU00303"/>
    </source>
</evidence>
<evidence type="ECO:0000305" key="3"/>
<evidence type="ECO:0007829" key="4">
    <source>
        <dbReference type="PDB" id="7XFD"/>
    </source>
</evidence>
<evidence type="ECO:0007829" key="5">
    <source>
        <dbReference type="PDB" id="7XFF"/>
    </source>
</evidence>
<protein>
    <recommendedName>
        <fullName>Putative polysaccharide export protein Wza</fullName>
    </recommendedName>
</protein>
<gene>
    <name type="primary">wza</name>
    <name type="ordered locus">b2062</name>
    <name type="ordered locus">JW2047</name>
</gene>
<comment type="function">
    <text>Probably involved in the export of the extracellular polysaccharide colanic acid from the cell to medium.</text>
</comment>
<comment type="pathway">
    <text>Glycan metabolism; exopolysaccharide biosynthesis.</text>
</comment>
<comment type="subcellular location">
    <subcellularLocation>
        <location evidence="1">Cell outer membrane</location>
        <topology evidence="1">Multi-pass membrane protein</topology>
    </subcellularLocation>
</comment>
<comment type="similarity">
    <text evidence="3">Belongs to the BexD/CtrA/VexA family.</text>
</comment>
<accession>P0A930</accession>
<accession>P71235</accession>
<accession>P71273</accession>
<accession>P76388</accession>
<accession>Q2MAY0</accession>
<proteinExistence type="evidence at protein level"/>
<reference key="1">
    <citation type="journal article" date="1997" name="Science">
        <title>The complete genome sequence of Escherichia coli K-12.</title>
        <authorList>
            <person name="Blattner F.R."/>
            <person name="Plunkett G. III"/>
            <person name="Bloch C.A."/>
            <person name="Perna N.T."/>
            <person name="Burland V."/>
            <person name="Riley M."/>
            <person name="Collado-Vides J."/>
            <person name="Glasner J.D."/>
            <person name="Rode C.K."/>
            <person name="Mayhew G.F."/>
            <person name="Gregor J."/>
            <person name="Davis N.W."/>
            <person name="Kirkpatrick H.A."/>
            <person name="Goeden M.A."/>
            <person name="Rose D.J."/>
            <person name="Mau B."/>
            <person name="Shao Y."/>
        </authorList>
    </citation>
    <scope>NUCLEOTIDE SEQUENCE [LARGE SCALE GENOMIC DNA]</scope>
    <source>
        <strain>K12 / MG1655 / ATCC 47076</strain>
    </source>
</reference>
<reference key="2">
    <citation type="journal article" date="2006" name="Mol. Syst. Biol.">
        <title>Highly accurate genome sequences of Escherichia coli K-12 strains MG1655 and W3110.</title>
        <authorList>
            <person name="Hayashi K."/>
            <person name="Morooka N."/>
            <person name="Yamamoto Y."/>
            <person name="Fujita K."/>
            <person name="Isono K."/>
            <person name="Choi S."/>
            <person name="Ohtsubo E."/>
            <person name="Baba T."/>
            <person name="Wanner B.L."/>
            <person name="Mori H."/>
            <person name="Horiuchi T."/>
        </authorList>
    </citation>
    <scope>NUCLEOTIDE SEQUENCE [LARGE SCALE GENOMIC DNA]</scope>
    <source>
        <strain>K12 / W3110 / ATCC 27325 / DSM 5911</strain>
    </source>
</reference>
<reference key="3">
    <citation type="journal article" date="1996" name="J. Bacteriol.">
        <title>Identification of the promoter region for the colanic acid polysaccharide biosynthetic genes in Escherichia coli K-12.</title>
        <authorList>
            <person name="Stout V."/>
        </authorList>
    </citation>
    <scope>NUCLEOTIDE SEQUENCE [GENOMIC DNA] OF 1-135</scope>
    <source>
        <strain>K12 / MC4100 / ATCC 35695 / DSM 6574</strain>
    </source>
</reference>
<reference key="4">
    <citation type="journal article" date="1996" name="J. Bacteriol.">
        <title>Organization of the Escherichia coli K-12 gene cluster responsible for production of the extracellular polysaccharide colanic acid.</title>
        <authorList>
            <person name="Stevenson G."/>
            <person name="Andrianopoulos K."/>
            <person name="Hobbs M."/>
            <person name="Reeves P.R."/>
        </authorList>
    </citation>
    <scope>NUCLEOTIDE SEQUENCE [GENOMIC DNA] OF 91-379</scope>
    <source>
        <strain>K12</strain>
    </source>
</reference>
<feature type="signal peptide" evidence="2">
    <location>
        <begin position="1"/>
        <end position="20"/>
    </location>
</feature>
<feature type="chain" id="PRO_0000025222" description="Putative polysaccharide export protein Wza">
    <location>
        <begin position="21"/>
        <end position="379"/>
    </location>
</feature>
<feature type="lipid moiety-binding region" description="N-palmitoyl cysteine" evidence="2">
    <location>
        <position position="21"/>
    </location>
</feature>
<feature type="lipid moiety-binding region" description="S-diacylglycerol cysteine" evidence="2">
    <location>
        <position position="21"/>
    </location>
</feature>
<feature type="sequence conflict" description="In Ref. 3; AAC44334 and 4; AAC77833." evidence="3" ref="3 4">
    <original>P</original>
    <variation>R</variation>
    <location>
        <position position="106"/>
    </location>
</feature>
<feature type="sequence conflict" description="In Ref. 4; AAC77833." evidence="3" ref="4">
    <original>D</original>
    <variation>G</variation>
    <location>
        <position position="158"/>
    </location>
</feature>
<feature type="sequence conflict" description="In Ref. 4; AAC77833." evidence="3" ref="4">
    <original>Q</original>
    <variation>A</variation>
    <location>
        <position position="160"/>
    </location>
</feature>
<feature type="sequence conflict" description="In Ref. 4; AAC77833." evidence="3" ref="4">
    <original>D</original>
    <variation>G</variation>
    <location>
        <position position="321"/>
    </location>
</feature>
<feature type="helix" evidence="5">
    <location>
        <begin position="76"/>
        <end position="81"/>
    </location>
</feature>
<feature type="strand" evidence="4">
    <location>
        <begin position="92"/>
        <end position="97"/>
    </location>
</feature>
<feature type="helix" evidence="4">
    <location>
        <begin position="101"/>
        <end position="104"/>
    </location>
</feature>
<feature type="strand" evidence="4">
    <location>
        <begin position="109"/>
        <end position="111"/>
    </location>
</feature>
<feature type="helix" evidence="4">
    <location>
        <begin position="113"/>
        <end position="116"/>
    </location>
</feature>
<feature type="strand" evidence="4">
    <location>
        <begin position="117"/>
        <end position="119"/>
    </location>
</feature>
<feature type="strand" evidence="4">
    <location>
        <begin position="124"/>
        <end position="128"/>
    </location>
</feature>
<feature type="turn" evidence="4">
    <location>
        <begin position="129"/>
        <end position="131"/>
    </location>
</feature>
<feature type="strand" evidence="4">
    <location>
        <begin position="132"/>
        <end position="135"/>
    </location>
</feature>
<feature type="helix" evidence="4">
    <location>
        <begin position="141"/>
        <end position="152"/>
    </location>
</feature>
<feature type="turn" evidence="4">
    <location>
        <begin position="153"/>
        <end position="155"/>
    </location>
</feature>
<feature type="strand" evidence="4">
    <location>
        <begin position="156"/>
        <end position="158"/>
    </location>
</feature>
<feature type="strand" evidence="4">
    <location>
        <begin position="161"/>
        <end position="167"/>
    </location>
</feature>
<feature type="strand" evidence="4">
    <location>
        <begin position="172"/>
        <end position="179"/>
    </location>
</feature>
<feature type="strand" evidence="4">
    <location>
        <begin position="183"/>
        <end position="186"/>
    </location>
</feature>
<feature type="helix" evidence="4">
    <location>
        <begin position="194"/>
        <end position="200"/>
    </location>
</feature>
<feature type="strand" evidence="4">
    <location>
        <begin position="212"/>
        <end position="217"/>
    </location>
</feature>
<feature type="strand" evidence="4">
    <location>
        <begin position="220"/>
        <end position="224"/>
    </location>
</feature>
<feature type="helix" evidence="4">
    <location>
        <begin position="226"/>
        <end position="231"/>
    </location>
</feature>
<feature type="helix" evidence="5">
    <location>
        <begin position="235"/>
        <end position="237"/>
    </location>
</feature>
<feature type="strand" evidence="4">
    <location>
        <begin position="246"/>
        <end position="249"/>
    </location>
</feature>
<name>WZA_ECOLI</name>
<keyword id="KW-0002">3D-structure</keyword>
<keyword id="KW-0998">Cell outer membrane</keyword>
<keyword id="KW-0270">Exopolysaccharide synthesis</keyword>
<keyword id="KW-0406">Ion transport</keyword>
<keyword id="KW-0449">Lipoprotein</keyword>
<keyword id="KW-0472">Membrane</keyword>
<keyword id="KW-0564">Palmitate</keyword>
<keyword id="KW-0625">Polysaccharide transport</keyword>
<keyword id="KW-0626">Porin</keyword>
<keyword id="KW-1185">Reference proteome</keyword>
<keyword id="KW-0732">Signal</keyword>
<keyword id="KW-0762">Sugar transport</keyword>
<keyword id="KW-0812">Transmembrane</keyword>
<keyword id="KW-1134">Transmembrane beta strand</keyword>
<keyword id="KW-0813">Transport</keyword>
<dbReference type="EMBL" id="U00096">
    <property type="protein sequence ID" value="AAC75123.1"/>
    <property type="molecule type" value="Genomic_DNA"/>
</dbReference>
<dbReference type="EMBL" id="AP009048">
    <property type="protein sequence ID" value="BAE76576.1"/>
    <property type="molecule type" value="Genomic_DNA"/>
</dbReference>
<dbReference type="EMBL" id="U52666">
    <property type="protein sequence ID" value="AAC44334.1"/>
    <property type="molecule type" value="Genomic_DNA"/>
</dbReference>
<dbReference type="EMBL" id="U38473">
    <property type="protein sequence ID" value="AAC77833.1"/>
    <property type="molecule type" value="Genomic_DNA"/>
</dbReference>
<dbReference type="PIR" id="E64972">
    <property type="entry name" value="E64972"/>
</dbReference>
<dbReference type="RefSeq" id="NP_416566.1">
    <property type="nucleotide sequence ID" value="NC_000913.3"/>
</dbReference>
<dbReference type="RefSeq" id="WP_000978094.1">
    <property type="nucleotide sequence ID" value="NZ_STEB01000002.1"/>
</dbReference>
<dbReference type="PDB" id="7XFD">
    <property type="method" value="X-ray"/>
    <property type="resolution" value="2.20 A"/>
    <property type="chains" value="A/B=68-252"/>
</dbReference>
<dbReference type="PDB" id="7XFF">
    <property type="method" value="X-ray"/>
    <property type="resolution" value="2.30 A"/>
    <property type="chains" value="A/B/C/D/E/F/G/H=68-252"/>
</dbReference>
<dbReference type="PDBsum" id="7XFD"/>
<dbReference type="PDBsum" id="7XFF"/>
<dbReference type="SMR" id="P0A930"/>
<dbReference type="BioGRID" id="4261254">
    <property type="interactions" value="248"/>
</dbReference>
<dbReference type="DIP" id="DIP-11134N"/>
<dbReference type="FunCoup" id="P0A930">
    <property type="interactions" value="200"/>
</dbReference>
<dbReference type="IntAct" id="P0A930">
    <property type="interactions" value="2"/>
</dbReference>
<dbReference type="STRING" id="511145.b2062"/>
<dbReference type="TCDB" id="1.B.18.3.1">
    <property type="family name" value="the outer membrane auxiliary (oma) protein family"/>
</dbReference>
<dbReference type="PaxDb" id="511145-b2062"/>
<dbReference type="EnsemblBacteria" id="AAC75123">
    <property type="protein sequence ID" value="AAC75123"/>
    <property type="gene ID" value="b2062"/>
</dbReference>
<dbReference type="GeneID" id="93775129"/>
<dbReference type="GeneID" id="946558"/>
<dbReference type="KEGG" id="ecj:JW2047"/>
<dbReference type="KEGG" id="eco:b2062"/>
<dbReference type="KEGG" id="ecoc:C3026_11600"/>
<dbReference type="PATRIC" id="fig|1411691.4.peg.189"/>
<dbReference type="EchoBASE" id="EB3336"/>
<dbReference type="eggNOG" id="COG1596">
    <property type="taxonomic scope" value="Bacteria"/>
</dbReference>
<dbReference type="HOGENOM" id="CLU_038343_4_2_6"/>
<dbReference type="InParanoid" id="P0A930"/>
<dbReference type="OMA" id="GCTIIPG"/>
<dbReference type="OrthoDB" id="9808421at2"/>
<dbReference type="PhylomeDB" id="P0A930"/>
<dbReference type="BioCyc" id="EcoCyc:G7107-MONOMER"/>
<dbReference type="BioCyc" id="MetaCyc:G7107-MONOMER"/>
<dbReference type="UniPathway" id="UPA00631"/>
<dbReference type="PRO" id="PR:P0A930"/>
<dbReference type="Proteomes" id="UP000000625">
    <property type="component" value="Chromosome"/>
</dbReference>
<dbReference type="GO" id="GO:0009279">
    <property type="term" value="C:cell outer membrane"/>
    <property type="evidence" value="ECO:0007669"/>
    <property type="project" value="UniProtKB-SubCell"/>
</dbReference>
<dbReference type="GO" id="GO:0046930">
    <property type="term" value="C:pore complex"/>
    <property type="evidence" value="ECO:0007669"/>
    <property type="project" value="UniProtKB-KW"/>
</dbReference>
<dbReference type="GO" id="GO:0015159">
    <property type="term" value="F:polysaccharide transmembrane transporter activity"/>
    <property type="evidence" value="ECO:0000269"/>
    <property type="project" value="EcoCyc"/>
</dbReference>
<dbReference type="GO" id="GO:0015288">
    <property type="term" value="F:porin activity"/>
    <property type="evidence" value="ECO:0007669"/>
    <property type="project" value="UniProtKB-KW"/>
</dbReference>
<dbReference type="GO" id="GO:0046377">
    <property type="term" value="P:colanic acid metabolic process"/>
    <property type="evidence" value="ECO:0000317"/>
    <property type="project" value="EcoCyc"/>
</dbReference>
<dbReference type="GO" id="GO:0006811">
    <property type="term" value="P:monoatomic ion transport"/>
    <property type="evidence" value="ECO:0007669"/>
    <property type="project" value="UniProtKB-KW"/>
</dbReference>
<dbReference type="GO" id="GO:0000271">
    <property type="term" value="P:polysaccharide biosynthetic process"/>
    <property type="evidence" value="ECO:0007669"/>
    <property type="project" value="UniProtKB-KW"/>
</dbReference>
<dbReference type="GO" id="GO:0015774">
    <property type="term" value="P:polysaccharide transport"/>
    <property type="evidence" value="ECO:0000269"/>
    <property type="project" value="EcoCyc"/>
</dbReference>
<dbReference type="Gene3D" id="1.20.5.70">
    <property type="match status" value="1"/>
</dbReference>
<dbReference type="Gene3D" id="3.10.560.10">
    <property type="entry name" value="Outer membrane lipoprotein wza domain like"/>
    <property type="match status" value="2"/>
</dbReference>
<dbReference type="Gene3D" id="3.30.1950.10">
    <property type="entry name" value="wza like domain"/>
    <property type="match status" value="1"/>
</dbReference>
<dbReference type="InterPro" id="IPR049712">
    <property type="entry name" value="Poly_export"/>
</dbReference>
<dbReference type="InterPro" id="IPR003715">
    <property type="entry name" value="Poly_export_N"/>
</dbReference>
<dbReference type="InterPro" id="IPR054765">
    <property type="entry name" value="SLBB_dom"/>
</dbReference>
<dbReference type="InterPro" id="IPR040716">
    <property type="entry name" value="Wza_C"/>
</dbReference>
<dbReference type="NCBIfam" id="NF011658">
    <property type="entry name" value="PRK15078.1"/>
    <property type="match status" value="1"/>
</dbReference>
<dbReference type="PANTHER" id="PTHR33619">
    <property type="entry name" value="POLYSACCHARIDE EXPORT PROTEIN GFCE-RELATED"/>
    <property type="match status" value="1"/>
</dbReference>
<dbReference type="PANTHER" id="PTHR33619:SF3">
    <property type="entry name" value="POLYSACCHARIDE EXPORT PROTEIN GFCE-RELATED"/>
    <property type="match status" value="1"/>
</dbReference>
<dbReference type="Pfam" id="PF02563">
    <property type="entry name" value="Poly_export"/>
    <property type="match status" value="1"/>
</dbReference>
<dbReference type="Pfam" id="PF22461">
    <property type="entry name" value="SLBB_2"/>
    <property type="match status" value="2"/>
</dbReference>
<dbReference type="Pfam" id="PF18412">
    <property type="entry name" value="Wza_C"/>
    <property type="match status" value="1"/>
</dbReference>
<dbReference type="PROSITE" id="PS51257">
    <property type="entry name" value="PROKAR_LIPOPROTEIN"/>
    <property type="match status" value="1"/>
</dbReference>